<comment type="function">
    <text evidence="1">Catalyzes the first step in hexosamine metabolism, converting fructose-6P into glucosamine-6P using glutamine as a nitrogen source.</text>
</comment>
<comment type="catalytic activity">
    <reaction evidence="1">
        <text>D-fructose 6-phosphate + L-glutamine = D-glucosamine 6-phosphate + L-glutamate</text>
        <dbReference type="Rhea" id="RHEA:13237"/>
        <dbReference type="ChEBI" id="CHEBI:29985"/>
        <dbReference type="ChEBI" id="CHEBI:58359"/>
        <dbReference type="ChEBI" id="CHEBI:58725"/>
        <dbReference type="ChEBI" id="CHEBI:61527"/>
        <dbReference type="EC" id="2.6.1.16"/>
    </reaction>
</comment>
<comment type="subunit">
    <text evidence="1">Homodimer.</text>
</comment>
<comment type="subcellular location">
    <subcellularLocation>
        <location evidence="1">Cytoplasm</location>
    </subcellularLocation>
</comment>
<organism>
    <name type="scientific">Tropheryma whipplei (strain Twist)</name>
    <name type="common">Whipple's bacillus</name>
    <dbReference type="NCBI Taxonomy" id="203267"/>
    <lineage>
        <taxon>Bacteria</taxon>
        <taxon>Bacillati</taxon>
        <taxon>Actinomycetota</taxon>
        <taxon>Actinomycetes</taxon>
        <taxon>Micrococcales</taxon>
        <taxon>Tropherymataceae</taxon>
        <taxon>Tropheryma</taxon>
    </lineage>
</organism>
<accession>Q83FU2</accession>
<name>GLMS_TROWT</name>
<reference key="1">
    <citation type="journal article" date="2003" name="Genome Res.">
        <title>Tropheryma whipplei twist: a human pathogenic Actinobacteria with a reduced genome.</title>
        <authorList>
            <person name="Raoult D."/>
            <person name="Ogata H."/>
            <person name="Audic S."/>
            <person name="Robert C."/>
            <person name="Suhre K."/>
            <person name="Drancourt M."/>
            <person name="Claverie J.-M."/>
        </authorList>
    </citation>
    <scope>NUCLEOTIDE SEQUENCE [LARGE SCALE GENOMIC DNA]</scope>
    <source>
        <strain>Twist</strain>
    </source>
</reference>
<protein>
    <recommendedName>
        <fullName evidence="1">Glutamine--fructose-6-phosphate aminotransferase [isomerizing]</fullName>
        <ecNumber evidence="1">2.6.1.16</ecNumber>
    </recommendedName>
    <alternativeName>
        <fullName evidence="1">D-fructose-6-phosphate amidotransferase</fullName>
    </alternativeName>
    <alternativeName>
        <fullName evidence="1">GFAT</fullName>
    </alternativeName>
    <alternativeName>
        <fullName evidence="1">Glucosamine-6-phosphate synthase</fullName>
    </alternativeName>
    <alternativeName>
        <fullName evidence="1">Hexosephosphate aminotransferase</fullName>
    </alternativeName>
    <alternativeName>
        <fullName evidence="1">L-glutamine--D-fructose-6-phosphate amidotransferase</fullName>
    </alternativeName>
</protein>
<feature type="initiator methionine" description="Removed" evidence="1">
    <location>
        <position position="1"/>
    </location>
</feature>
<feature type="chain" id="PRO_0000135407" description="Glutamine--fructose-6-phosphate aminotransferase [isomerizing]">
    <location>
        <begin position="2"/>
        <end position="616"/>
    </location>
</feature>
<feature type="domain" description="Glutamine amidotransferase type-2" evidence="1">
    <location>
        <begin position="2"/>
        <end position="222"/>
    </location>
</feature>
<feature type="domain" description="SIS 1" evidence="1">
    <location>
        <begin position="289"/>
        <end position="428"/>
    </location>
</feature>
<feature type="domain" description="SIS 2" evidence="1">
    <location>
        <begin position="461"/>
        <end position="606"/>
    </location>
</feature>
<feature type="region of interest" description="Disordered" evidence="2">
    <location>
        <begin position="70"/>
        <end position="89"/>
    </location>
</feature>
<feature type="active site" description="Nucleophile; for GATase activity" evidence="1">
    <location>
        <position position="2"/>
    </location>
</feature>
<feature type="active site" description="For Fru-6P isomerization activity" evidence="1">
    <location>
        <position position="611"/>
    </location>
</feature>
<gene>
    <name evidence="1" type="primary">glmS</name>
    <name type="ordered locus">TWT_606</name>
</gene>
<evidence type="ECO:0000255" key="1">
    <source>
        <dbReference type="HAMAP-Rule" id="MF_00164"/>
    </source>
</evidence>
<evidence type="ECO:0000256" key="2">
    <source>
        <dbReference type="SAM" id="MobiDB-lite"/>
    </source>
</evidence>
<sequence length="616" mass="67202">MCGIIGYSGPRPAAEVLLKGLERLEYRGYDSAGIAVVTDKAYIESVKKSGKLNVLKTCLERRTTPIVGSTGIGHTRWATHGEPSDRNAHPHMDTEQSLAIVHNGIIENSDVLKRELLASGKSFTSETDTEVVAHLLSDAFKKTQDLVQAFVEVTQRLEGAFAVVAIHKDQPNTIVAAKNNSPLLLGFGQGENFLASDIAAFAEYTQRVANIDQERIVALSGDSVYITDFAGHPVDYEVHTVSWHPASVDSSGWSSFMLKEIFEEPQAVENTLKGRTEDGTVILPECDHIRDDLLAIDRVVLVGCGTAAYAAMTASYSIEAWAGLPVSVELSHEFRYREPVLNSKTLAVFISQSGETMDSLMAVRYARQAGVKTISVCNVMDSSIPKESHAVIYTKAGPEVAVASTKSFVCQIVVLYLLALYLGQLRGFRSIFPRQKAVCELNRLPVKLKQVLEIYESVRQLAHWMSDSRSILFLGRHAGYPIALEAALKLKELAYIHAEGFAAGELKHGPIALIEPGQPVFVIVPSPVGSPILHAKVISNIREIKSRGARIIAIAAEGDSAVLPHTDSVLRIPLTRYSFEPLLSIVPLQIFALELAADKGFDVDRPRNLAKSVTVE</sequence>
<proteinExistence type="inferred from homology"/>
<keyword id="KW-0032">Aminotransferase</keyword>
<keyword id="KW-0963">Cytoplasm</keyword>
<keyword id="KW-0315">Glutamine amidotransferase</keyword>
<keyword id="KW-1185">Reference proteome</keyword>
<keyword id="KW-0677">Repeat</keyword>
<keyword id="KW-0808">Transferase</keyword>
<dbReference type="EC" id="2.6.1.16" evidence="1"/>
<dbReference type="EMBL" id="AE014184">
    <property type="protein sequence ID" value="AAO44703.1"/>
    <property type="molecule type" value="Genomic_DNA"/>
</dbReference>
<dbReference type="RefSeq" id="WP_011102677.1">
    <property type="nucleotide sequence ID" value="NC_004572.3"/>
</dbReference>
<dbReference type="SMR" id="Q83FU2"/>
<dbReference type="STRING" id="203267.TWT_606"/>
<dbReference type="KEGG" id="twh:TWT_606"/>
<dbReference type="eggNOG" id="COG0449">
    <property type="taxonomic scope" value="Bacteria"/>
</dbReference>
<dbReference type="HOGENOM" id="CLU_012520_5_2_11"/>
<dbReference type="OrthoDB" id="9761808at2"/>
<dbReference type="Proteomes" id="UP000002200">
    <property type="component" value="Chromosome"/>
</dbReference>
<dbReference type="GO" id="GO:0005829">
    <property type="term" value="C:cytosol"/>
    <property type="evidence" value="ECO:0007669"/>
    <property type="project" value="TreeGrafter"/>
</dbReference>
<dbReference type="GO" id="GO:0097367">
    <property type="term" value="F:carbohydrate derivative binding"/>
    <property type="evidence" value="ECO:0007669"/>
    <property type="project" value="InterPro"/>
</dbReference>
<dbReference type="GO" id="GO:0004360">
    <property type="term" value="F:glutamine-fructose-6-phosphate transaminase (isomerizing) activity"/>
    <property type="evidence" value="ECO:0007669"/>
    <property type="project" value="UniProtKB-UniRule"/>
</dbReference>
<dbReference type="GO" id="GO:0005975">
    <property type="term" value="P:carbohydrate metabolic process"/>
    <property type="evidence" value="ECO:0007669"/>
    <property type="project" value="UniProtKB-UniRule"/>
</dbReference>
<dbReference type="GO" id="GO:0006002">
    <property type="term" value="P:fructose 6-phosphate metabolic process"/>
    <property type="evidence" value="ECO:0007669"/>
    <property type="project" value="TreeGrafter"/>
</dbReference>
<dbReference type="GO" id="GO:0006487">
    <property type="term" value="P:protein N-linked glycosylation"/>
    <property type="evidence" value="ECO:0007669"/>
    <property type="project" value="TreeGrafter"/>
</dbReference>
<dbReference type="GO" id="GO:0006047">
    <property type="term" value="P:UDP-N-acetylglucosamine metabolic process"/>
    <property type="evidence" value="ECO:0007669"/>
    <property type="project" value="TreeGrafter"/>
</dbReference>
<dbReference type="CDD" id="cd00714">
    <property type="entry name" value="GFAT"/>
    <property type="match status" value="1"/>
</dbReference>
<dbReference type="CDD" id="cd05008">
    <property type="entry name" value="SIS_GlmS_GlmD_1"/>
    <property type="match status" value="1"/>
</dbReference>
<dbReference type="CDD" id="cd05009">
    <property type="entry name" value="SIS_GlmS_GlmD_2"/>
    <property type="match status" value="1"/>
</dbReference>
<dbReference type="FunFam" id="3.40.50.10490:FF:000001">
    <property type="entry name" value="Glutamine--fructose-6-phosphate aminotransferase [isomerizing]"/>
    <property type="match status" value="1"/>
</dbReference>
<dbReference type="FunFam" id="3.60.20.10:FF:000006">
    <property type="entry name" value="Glutamine--fructose-6-phosphate aminotransferase [isomerizing]"/>
    <property type="match status" value="1"/>
</dbReference>
<dbReference type="Gene3D" id="3.40.50.10490">
    <property type="entry name" value="Glucose-6-phosphate isomerase like protein, domain 1"/>
    <property type="match status" value="2"/>
</dbReference>
<dbReference type="Gene3D" id="3.60.20.10">
    <property type="entry name" value="Glutamine Phosphoribosylpyrophosphate, subunit 1, domain 1"/>
    <property type="match status" value="1"/>
</dbReference>
<dbReference type="HAMAP" id="MF_00164">
    <property type="entry name" value="GlmS"/>
    <property type="match status" value="1"/>
</dbReference>
<dbReference type="InterPro" id="IPR017932">
    <property type="entry name" value="GATase_2_dom"/>
</dbReference>
<dbReference type="InterPro" id="IPR005855">
    <property type="entry name" value="GFAT"/>
</dbReference>
<dbReference type="InterPro" id="IPR047084">
    <property type="entry name" value="GFAT_N"/>
</dbReference>
<dbReference type="InterPro" id="IPR035466">
    <property type="entry name" value="GlmS/AgaS_SIS"/>
</dbReference>
<dbReference type="InterPro" id="IPR035490">
    <property type="entry name" value="GlmS/FrlB_SIS"/>
</dbReference>
<dbReference type="InterPro" id="IPR029055">
    <property type="entry name" value="Ntn_hydrolases_N"/>
</dbReference>
<dbReference type="InterPro" id="IPR001347">
    <property type="entry name" value="SIS_dom"/>
</dbReference>
<dbReference type="InterPro" id="IPR046348">
    <property type="entry name" value="SIS_dom_sf"/>
</dbReference>
<dbReference type="NCBIfam" id="TIGR01135">
    <property type="entry name" value="glmS"/>
    <property type="match status" value="1"/>
</dbReference>
<dbReference type="NCBIfam" id="NF001484">
    <property type="entry name" value="PRK00331.1"/>
    <property type="match status" value="1"/>
</dbReference>
<dbReference type="PANTHER" id="PTHR10937">
    <property type="entry name" value="GLUCOSAMINE--FRUCTOSE-6-PHOSPHATE AMINOTRANSFERASE, ISOMERIZING"/>
    <property type="match status" value="1"/>
</dbReference>
<dbReference type="PANTHER" id="PTHR10937:SF0">
    <property type="entry name" value="GLUTAMINE--FRUCTOSE-6-PHOSPHATE TRANSAMINASE (ISOMERIZING)"/>
    <property type="match status" value="1"/>
</dbReference>
<dbReference type="Pfam" id="PF13522">
    <property type="entry name" value="GATase_6"/>
    <property type="match status" value="1"/>
</dbReference>
<dbReference type="Pfam" id="PF01380">
    <property type="entry name" value="SIS"/>
    <property type="match status" value="2"/>
</dbReference>
<dbReference type="SUPFAM" id="SSF56235">
    <property type="entry name" value="N-terminal nucleophile aminohydrolases (Ntn hydrolases)"/>
    <property type="match status" value="1"/>
</dbReference>
<dbReference type="SUPFAM" id="SSF53697">
    <property type="entry name" value="SIS domain"/>
    <property type="match status" value="1"/>
</dbReference>
<dbReference type="PROSITE" id="PS51278">
    <property type="entry name" value="GATASE_TYPE_2"/>
    <property type="match status" value="1"/>
</dbReference>
<dbReference type="PROSITE" id="PS51464">
    <property type="entry name" value="SIS"/>
    <property type="match status" value="2"/>
</dbReference>